<organism>
    <name type="scientific">Bacillus cereus (strain 03BB102)</name>
    <dbReference type="NCBI Taxonomy" id="572264"/>
    <lineage>
        <taxon>Bacteria</taxon>
        <taxon>Bacillati</taxon>
        <taxon>Bacillota</taxon>
        <taxon>Bacilli</taxon>
        <taxon>Bacillales</taxon>
        <taxon>Bacillaceae</taxon>
        <taxon>Bacillus</taxon>
        <taxon>Bacillus cereus group</taxon>
    </lineage>
</organism>
<gene>
    <name evidence="1" type="primary">rimP</name>
    <name type="ordered locus">BCA_3913</name>
</gene>
<proteinExistence type="inferred from homology"/>
<reference key="1">
    <citation type="submission" date="2009-02" db="EMBL/GenBank/DDBJ databases">
        <title>Genome sequence of Bacillus cereus 03BB102.</title>
        <authorList>
            <person name="Dodson R.J."/>
            <person name="Jackson P."/>
            <person name="Munk A.C."/>
            <person name="Brettin T."/>
            <person name="Bruce D."/>
            <person name="Detter C."/>
            <person name="Tapia R."/>
            <person name="Han C."/>
            <person name="Sutton G."/>
            <person name="Sims D."/>
        </authorList>
    </citation>
    <scope>NUCLEOTIDE SEQUENCE [LARGE SCALE GENOMIC DNA]</scope>
    <source>
        <strain>03BB102</strain>
    </source>
</reference>
<protein>
    <recommendedName>
        <fullName evidence="1">Ribosome maturation factor RimP</fullName>
    </recommendedName>
</protein>
<accession>C1EP39</accession>
<keyword id="KW-0963">Cytoplasm</keyword>
<keyword id="KW-0690">Ribosome biogenesis</keyword>
<dbReference type="EMBL" id="CP001407">
    <property type="protein sequence ID" value="ACO30895.1"/>
    <property type="molecule type" value="Genomic_DNA"/>
</dbReference>
<dbReference type="RefSeq" id="WP_000359097.1">
    <property type="nucleotide sequence ID" value="NZ_CP009318.1"/>
</dbReference>
<dbReference type="SMR" id="C1EP39"/>
<dbReference type="GeneID" id="93007295"/>
<dbReference type="KEGG" id="bcx:BCA_3913"/>
<dbReference type="PATRIC" id="fig|572264.18.peg.3870"/>
<dbReference type="Proteomes" id="UP000002210">
    <property type="component" value="Chromosome"/>
</dbReference>
<dbReference type="GO" id="GO:0005829">
    <property type="term" value="C:cytosol"/>
    <property type="evidence" value="ECO:0007669"/>
    <property type="project" value="TreeGrafter"/>
</dbReference>
<dbReference type="GO" id="GO:0000028">
    <property type="term" value="P:ribosomal small subunit assembly"/>
    <property type="evidence" value="ECO:0007669"/>
    <property type="project" value="TreeGrafter"/>
</dbReference>
<dbReference type="GO" id="GO:0006412">
    <property type="term" value="P:translation"/>
    <property type="evidence" value="ECO:0007669"/>
    <property type="project" value="TreeGrafter"/>
</dbReference>
<dbReference type="CDD" id="cd01734">
    <property type="entry name" value="YlxS_C"/>
    <property type="match status" value="1"/>
</dbReference>
<dbReference type="FunFam" id="2.30.30.180:FF:000002">
    <property type="entry name" value="Ribosome maturation factor RimP"/>
    <property type="match status" value="1"/>
</dbReference>
<dbReference type="FunFam" id="3.30.300.70:FF:000001">
    <property type="entry name" value="Ribosome maturation factor RimP"/>
    <property type="match status" value="1"/>
</dbReference>
<dbReference type="Gene3D" id="2.30.30.180">
    <property type="entry name" value="Ribosome maturation factor RimP, C-terminal domain"/>
    <property type="match status" value="1"/>
</dbReference>
<dbReference type="Gene3D" id="3.30.300.70">
    <property type="entry name" value="RimP-like superfamily, N-terminal"/>
    <property type="match status" value="1"/>
</dbReference>
<dbReference type="HAMAP" id="MF_01077">
    <property type="entry name" value="RimP"/>
    <property type="match status" value="1"/>
</dbReference>
<dbReference type="InterPro" id="IPR003728">
    <property type="entry name" value="Ribosome_maturation_RimP"/>
</dbReference>
<dbReference type="InterPro" id="IPR028998">
    <property type="entry name" value="RimP_C"/>
</dbReference>
<dbReference type="InterPro" id="IPR036847">
    <property type="entry name" value="RimP_C_sf"/>
</dbReference>
<dbReference type="InterPro" id="IPR028989">
    <property type="entry name" value="RimP_N"/>
</dbReference>
<dbReference type="InterPro" id="IPR035956">
    <property type="entry name" value="RimP_N_sf"/>
</dbReference>
<dbReference type="NCBIfam" id="NF000928">
    <property type="entry name" value="PRK00092.1-2"/>
    <property type="match status" value="1"/>
</dbReference>
<dbReference type="PANTHER" id="PTHR33867">
    <property type="entry name" value="RIBOSOME MATURATION FACTOR RIMP"/>
    <property type="match status" value="1"/>
</dbReference>
<dbReference type="PANTHER" id="PTHR33867:SF1">
    <property type="entry name" value="RIBOSOME MATURATION FACTOR RIMP"/>
    <property type="match status" value="1"/>
</dbReference>
<dbReference type="Pfam" id="PF17384">
    <property type="entry name" value="DUF150_C"/>
    <property type="match status" value="1"/>
</dbReference>
<dbReference type="Pfam" id="PF02576">
    <property type="entry name" value="RimP_N"/>
    <property type="match status" value="1"/>
</dbReference>
<dbReference type="SUPFAM" id="SSF74942">
    <property type="entry name" value="YhbC-like, C-terminal domain"/>
    <property type="match status" value="1"/>
</dbReference>
<dbReference type="SUPFAM" id="SSF75420">
    <property type="entry name" value="YhbC-like, N-terminal domain"/>
    <property type="match status" value="1"/>
</dbReference>
<feature type="chain" id="PRO_1000149780" description="Ribosome maturation factor RimP">
    <location>
        <begin position="1"/>
        <end position="156"/>
    </location>
</feature>
<comment type="function">
    <text evidence="1">Required for maturation of 30S ribosomal subunits.</text>
</comment>
<comment type="subcellular location">
    <subcellularLocation>
        <location evidence="1">Cytoplasm</location>
    </subcellularLocation>
</comment>
<comment type="similarity">
    <text evidence="1">Belongs to the RimP family.</text>
</comment>
<sequence>MDKKVTEVVEAFAQPIVEELNLELVDVEYVKEGQDWFLRVFIDSEKGVDIEECGAVSERLSEALDKEDPIPHLYFLDVSSPGAERPLKKEKDFQQAVGKQVAIKTYEPIDGEKMFEGKMLSYDGTTITLLLTIKTRKKEIQIPMDKVANARLAVTF</sequence>
<evidence type="ECO:0000255" key="1">
    <source>
        <dbReference type="HAMAP-Rule" id="MF_01077"/>
    </source>
</evidence>
<name>RIMP_BACC3</name>